<comment type="function">
    <text evidence="1">A key translational regulator that binds mRNA to regulate translation initiation and/or mRNA stability. Mediates global changes in gene expression, shifting from rapid growth to stress survival by linking envelope stress, the stringent response and the catabolite repression systems. Usually binds in the 5'-UTR; binding at or near the Shine-Dalgarno sequence prevents ribosome-binding, repressing translation, binding elsewhere in the 5'-UTR can activate translation and/or stabilize the mRNA. Its function is antagonized by small RNA(s).</text>
</comment>
<comment type="subunit">
    <text evidence="1">Homodimer; the beta-strands of each monomer intercalate to form a hydrophobic core, while the alpha-helices form wings that extend away from the core.</text>
</comment>
<comment type="subcellular location">
    <subcellularLocation>
        <location evidence="1">Cytoplasm</location>
    </subcellularLocation>
</comment>
<comment type="similarity">
    <text evidence="1">Belongs to the CsrA/RsmA family.</text>
</comment>
<dbReference type="EMBL" id="CP000880">
    <property type="protein sequence ID" value="ABX20100.1"/>
    <property type="molecule type" value="Genomic_DNA"/>
</dbReference>
<dbReference type="SMR" id="A9MFZ2"/>
<dbReference type="STRING" id="41514.SARI_00147"/>
<dbReference type="KEGG" id="ses:SARI_00147"/>
<dbReference type="HOGENOM" id="CLU_164837_2_1_6"/>
<dbReference type="Proteomes" id="UP000002084">
    <property type="component" value="Chromosome"/>
</dbReference>
<dbReference type="GO" id="GO:0005829">
    <property type="term" value="C:cytosol"/>
    <property type="evidence" value="ECO:0007669"/>
    <property type="project" value="TreeGrafter"/>
</dbReference>
<dbReference type="GO" id="GO:0048027">
    <property type="term" value="F:mRNA 5'-UTR binding"/>
    <property type="evidence" value="ECO:0007669"/>
    <property type="project" value="UniProtKB-UniRule"/>
</dbReference>
<dbReference type="GO" id="GO:0006402">
    <property type="term" value="P:mRNA catabolic process"/>
    <property type="evidence" value="ECO:0007669"/>
    <property type="project" value="InterPro"/>
</dbReference>
<dbReference type="GO" id="GO:0045947">
    <property type="term" value="P:negative regulation of translational initiation"/>
    <property type="evidence" value="ECO:0007669"/>
    <property type="project" value="UniProtKB-UniRule"/>
</dbReference>
<dbReference type="GO" id="GO:0045948">
    <property type="term" value="P:positive regulation of translational initiation"/>
    <property type="evidence" value="ECO:0007669"/>
    <property type="project" value="UniProtKB-UniRule"/>
</dbReference>
<dbReference type="GO" id="GO:0006109">
    <property type="term" value="P:regulation of carbohydrate metabolic process"/>
    <property type="evidence" value="ECO:0007669"/>
    <property type="project" value="UniProtKB-UniRule"/>
</dbReference>
<dbReference type="FunFam" id="2.60.40.4380:FF:000001">
    <property type="entry name" value="Translational regulator CsrA"/>
    <property type="match status" value="1"/>
</dbReference>
<dbReference type="Gene3D" id="2.60.40.4380">
    <property type="entry name" value="Translational regulator CsrA"/>
    <property type="match status" value="1"/>
</dbReference>
<dbReference type="HAMAP" id="MF_00167">
    <property type="entry name" value="CsrA"/>
    <property type="match status" value="1"/>
</dbReference>
<dbReference type="InterPro" id="IPR003751">
    <property type="entry name" value="CsrA"/>
</dbReference>
<dbReference type="InterPro" id="IPR036107">
    <property type="entry name" value="CsrA_sf"/>
</dbReference>
<dbReference type="NCBIfam" id="TIGR00202">
    <property type="entry name" value="csrA"/>
    <property type="match status" value="1"/>
</dbReference>
<dbReference type="NCBIfam" id="NF002469">
    <property type="entry name" value="PRK01712.1"/>
    <property type="match status" value="1"/>
</dbReference>
<dbReference type="PANTHER" id="PTHR34984">
    <property type="entry name" value="CARBON STORAGE REGULATOR"/>
    <property type="match status" value="1"/>
</dbReference>
<dbReference type="PANTHER" id="PTHR34984:SF1">
    <property type="entry name" value="CARBON STORAGE REGULATOR"/>
    <property type="match status" value="1"/>
</dbReference>
<dbReference type="Pfam" id="PF02599">
    <property type="entry name" value="CsrA"/>
    <property type="match status" value="1"/>
</dbReference>
<dbReference type="SUPFAM" id="SSF117130">
    <property type="entry name" value="CsrA-like"/>
    <property type="match status" value="1"/>
</dbReference>
<sequence length="61" mass="6856">MLILTRRVGETLMIGDEVTVTVLGVKGNQVRIGVNAPKEVSVHREEIYQRIQAEKSQQSSY</sequence>
<gene>
    <name evidence="1" type="primary">csrA</name>
    <name type="ordered locus">SARI_00147</name>
</gene>
<protein>
    <recommendedName>
        <fullName evidence="1">Translational regulator CsrA</fullName>
    </recommendedName>
    <alternativeName>
        <fullName evidence="1">Carbon storage regulator</fullName>
    </alternativeName>
</protein>
<keyword id="KW-0010">Activator</keyword>
<keyword id="KW-0963">Cytoplasm</keyword>
<keyword id="KW-1185">Reference proteome</keyword>
<keyword id="KW-0678">Repressor</keyword>
<keyword id="KW-0694">RNA-binding</keyword>
<keyword id="KW-0810">Translation regulation</keyword>
<accession>A9MFZ2</accession>
<reference key="1">
    <citation type="submission" date="2007-11" db="EMBL/GenBank/DDBJ databases">
        <authorList>
            <consortium name="The Salmonella enterica serovar Arizonae Genome Sequencing Project"/>
            <person name="McClelland M."/>
            <person name="Sanderson E.K."/>
            <person name="Porwollik S."/>
            <person name="Spieth J."/>
            <person name="Clifton W.S."/>
            <person name="Fulton R."/>
            <person name="Chunyan W."/>
            <person name="Wollam A."/>
            <person name="Shah N."/>
            <person name="Pepin K."/>
            <person name="Bhonagiri V."/>
            <person name="Nash W."/>
            <person name="Johnson M."/>
            <person name="Thiruvilangam P."/>
            <person name="Wilson R."/>
        </authorList>
    </citation>
    <scope>NUCLEOTIDE SEQUENCE [LARGE SCALE GENOMIC DNA]</scope>
    <source>
        <strain>ATCC BAA-731 / CDC346-86 / RSK2980</strain>
    </source>
</reference>
<organism>
    <name type="scientific">Salmonella arizonae (strain ATCC BAA-731 / CDC346-86 / RSK2980)</name>
    <dbReference type="NCBI Taxonomy" id="41514"/>
    <lineage>
        <taxon>Bacteria</taxon>
        <taxon>Pseudomonadati</taxon>
        <taxon>Pseudomonadota</taxon>
        <taxon>Gammaproteobacteria</taxon>
        <taxon>Enterobacterales</taxon>
        <taxon>Enterobacteriaceae</taxon>
        <taxon>Salmonella</taxon>
    </lineage>
</organism>
<name>CSRA_SALAR</name>
<evidence type="ECO:0000255" key="1">
    <source>
        <dbReference type="HAMAP-Rule" id="MF_00167"/>
    </source>
</evidence>
<proteinExistence type="inferred from homology"/>
<feature type="chain" id="PRO_1000076994" description="Translational regulator CsrA">
    <location>
        <begin position="1"/>
        <end position="61"/>
    </location>
</feature>